<organism>
    <name type="scientific">Anaplasma phagocytophilum (strain HZ)</name>
    <dbReference type="NCBI Taxonomy" id="212042"/>
    <lineage>
        <taxon>Bacteria</taxon>
        <taxon>Pseudomonadati</taxon>
        <taxon>Pseudomonadota</taxon>
        <taxon>Alphaproteobacteria</taxon>
        <taxon>Rickettsiales</taxon>
        <taxon>Anaplasmataceae</taxon>
        <taxon>Anaplasma</taxon>
        <taxon>phagocytophilum group</taxon>
    </lineage>
</organism>
<evidence type="ECO:0000255" key="1">
    <source>
        <dbReference type="HAMAP-Rule" id="MF_00321"/>
    </source>
</evidence>
<protein>
    <recommendedName>
        <fullName evidence="1">Probable GTP-binding protein EngB</fullName>
    </recommendedName>
</protein>
<accession>Q2GKS7</accession>
<dbReference type="EMBL" id="CP000235">
    <property type="protein sequence ID" value="ABD44090.1"/>
    <property type="molecule type" value="Genomic_DNA"/>
</dbReference>
<dbReference type="RefSeq" id="WP_011450547.1">
    <property type="nucleotide sequence ID" value="NC_007797.1"/>
</dbReference>
<dbReference type="SMR" id="Q2GKS7"/>
<dbReference type="STRING" id="212042.APH_0421"/>
<dbReference type="PaxDb" id="212042-APH_0421"/>
<dbReference type="EnsemblBacteria" id="ABD44090">
    <property type="protein sequence ID" value="ABD44090"/>
    <property type="gene ID" value="APH_0421"/>
</dbReference>
<dbReference type="GeneID" id="92747404"/>
<dbReference type="KEGG" id="aph:APH_0421"/>
<dbReference type="eggNOG" id="COG0218">
    <property type="taxonomic scope" value="Bacteria"/>
</dbReference>
<dbReference type="HOGENOM" id="CLU_033732_2_0_5"/>
<dbReference type="Proteomes" id="UP000001943">
    <property type="component" value="Chromosome"/>
</dbReference>
<dbReference type="GO" id="GO:0005525">
    <property type="term" value="F:GTP binding"/>
    <property type="evidence" value="ECO:0007669"/>
    <property type="project" value="UniProtKB-UniRule"/>
</dbReference>
<dbReference type="GO" id="GO:0046872">
    <property type="term" value="F:metal ion binding"/>
    <property type="evidence" value="ECO:0007669"/>
    <property type="project" value="UniProtKB-KW"/>
</dbReference>
<dbReference type="GO" id="GO:0000917">
    <property type="term" value="P:division septum assembly"/>
    <property type="evidence" value="ECO:0007669"/>
    <property type="project" value="UniProtKB-KW"/>
</dbReference>
<dbReference type="CDD" id="cd01876">
    <property type="entry name" value="YihA_EngB"/>
    <property type="match status" value="1"/>
</dbReference>
<dbReference type="Gene3D" id="3.40.50.300">
    <property type="entry name" value="P-loop containing nucleotide triphosphate hydrolases"/>
    <property type="match status" value="1"/>
</dbReference>
<dbReference type="HAMAP" id="MF_00321">
    <property type="entry name" value="GTPase_EngB"/>
    <property type="match status" value="1"/>
</dbReference>
<dbReference type="InterPro" id="IPR030393">
    <property type="entry name" value="G_ENGB_dom"/>
</dbReference>
<dbReference type="InterPro" id="IPR006073">
    <property type="entry name" value="GTP-bd"/>
</dbReference>
<dbReference type="InterPro" id="IPR019987">
    <property type="entry name" value="GTP-bd_ribosome_bio_YsxC"/>
</dbReference>
<dbReference type="InterPro" id="IPR027417">
    <property type="entry name" value="P-loop_NTPase"/>
</dbReference>
<dbReference type="NCBIfam" id="TIGR03598">
    <property type="entry name" value="GTPase_YsxC"/>
    <property type="match status" value="1"/>
</dbReference>
<dbReference type="PANTHER" id="PTHR11649:SF13">
    <property type="entry name" value="ENGB-TYPE G DOMAIN-CONTAINING PROTEIN"/>
    <property type="match status" value="1"/>
</dbReference>
<dbReference type="PANTHER" id="PTHR11649">
    <property type="entry name" value="MSS1/TRME-RELATED GTP-BINDING PROTEIN"/>
    <property type="match status" value="1"/>
</dbReference>
<dbReference type="Pfam" id="PF01926">
    <property type="entry name" value="MMR_HSR1"/>
    <property type="match status" value="1"/>
</dbReference>
<dbReference type="SUPFAM" id="SSF52540">
    <property type="entry name" value="P-loop containing nucleoside triphosphate hydrolases"/>
    <property type="match status" value="1"/>
</dbReference>
<dbReference type="PROSITE" id="PS51706">
    <property type="entry name" value="G_ENGB"/>
    <property type="match status" value="1"/>
</dbReference>
<comment type="function">
    <text evidence="1">Necessary for normal cell division and for the maintenance of normal septation.</text>
</comment>
<comment type="cofactor">
    <cofactor evidence="1">
        <name>Mg(2+)</name>
        <dbReference type="ChEBI" id="CHEBI:18420"/>
    </cofactor>
</comment>
<comment type="similarity">
    <text evidence="1">Belongs to the TRAFAC class TrmE-Era-EngA-EngB-Septin-like GTPase superfamily. EngB GTPase family.</text>
</comment>
<reference key="1">
    <citation type="journal article" date="2006" name="PLoS Genet.">
        <title>Comparative genomics of emerging human ehrlichiosis agents.</title>
        <authorList>
            <person name="Dunning Hotopp J.C."/>
            <person name="Lin M."/>
            <person name="Madupu R."/>
            <person name="Crabtree J."/>
            <person name="Angiuoli S.V."/>
            <person name="Eisen J.A."/>
            <person name="Seshadri R."/>
            <person name="Ren Q."/>
            <person name="Wu M."/>
            <person name="Utterback T.R."/>
            <person name="Smith S."/>
            <person name="Lewis M."/>
            <person name="Khouri H."/>
            <person name="Zhang C."/>
            <person name="Niu H."/>
            <person name="Lin Q."/>
            <person name="Ohashi N."/>
            <person name="Zhi N."/>
            <person name="Nelson W.C."/>
            <person name="Brinkac L.M."/>
            <person name="Dodson R.J."/>
            <person name="Rosovitz M.J."/>
            <person name="Sundaram J.P."/>
            <person name="Daugherty S.C."/>
            <person name="Davidsen T."/>
            <person name="Durkin A.S."/>
            <person name="Gwinn M.L."/>
            <person name="Haft D.H."/>
            <person name="Selengut J.D."/>
            <person name="Sullivan S.A."/>
            <person name="Zafar N."/>
            <person name="Zhou L."/>
            <person name="Benahmed F."/>
            <person name="Forberger H."/>
            <person name="Halpin R."/>
            <person name="Mulligan S."/>
            <person name="Robinson J."/>
            <person name="White O."/>
            <person name="Rikihisa Y."/>
            <person name="Tettelin H."/>
        </authorList>
    </citation>
    <scope>NUCLEOTIDE SEQUENCE [LARGE SCALE GENOMIC DNA]</scope>
    <source>
        <strain>HZ</strain>
    </source>
</reference>
<name>ENGB_ANAPZ</name>
<feature type="chain" id="PRO_0000266809" description="Probable GTP-binding protein EngB">
    <location>
        <begin position="1"/>
        <end position="193"/>
    </location>
</feature>
<feature type="domain" description="EngB-type G" evidence="1">
    <location>
        <begin position="20"/>
        <end position="193"/>
    </location>
</feature>
<feature type="binding site" evidence="1">
    <location>
        <begin position="28"/>
        <end position="35"/>
    </location>
    <ligand>
        <name>GTP</name>
        <dbReference type="ChEBI" id="CHEBI:37565"/>
    </ligand>
</feature>
<feature type="binding site" evidence="1">
    <location>
        <position position="35"/>
    </location>
    <ligand>
        <name>Mg(2+)</name>
        <dbReference type="ChEBI" id="CHEBI:18420"/>
    </ligand>
</feature>
<feature type="binding site" evidence="1">
    <location>
        <begin position="55"/>
        <end position="59"/>
    </location>
    <ligand>
        <name>GTP</name>
        <dbReference type="ChEBI" id="CHEBI:37565"/>
    </ligand>
</feature>
<feature type="binding site" evidence="1">
    <location>
        <position position="57"/>
    </location>
    <ligand>
        <name>Mg(2+)</name>
        <dbReference type="ChEBI" id="CHEBI:18420"/>
    </ligand>
</feature>
<feature type="binding site" evidence="1">
    <location>
        <begin position="73"/>
        <end position="76"/>
    </location>
    <ligand>
        <name>GTP</name>
        <dbReference type="ChEBI" id="CHEBI:37565"/>
    </ligand>
</feature>
<feature type="binding site" evidence="1">
    <location>
        <begin position="140"/>
        <end position="143"/>
    </location>
    <ligand>
        <name>GTP</name>
        <dbReference type="ChEBI" id="CHEBI:37565"/>
    </ligand>
</feature>
<feature type="binding site" evidence="1">
    <location>
        <begin position="171"/>
        <end position="176"/>
    </location>
    <ligand>
        <name>GTP</name>
        <dbReference type="ChEBI" id="CHEBI:37565"/>
    </ligand>
</feature>
<sequence length="193" mass="21440">MLGCRFVAGVQDRKSFPDFGVPEVAFAGRSNVGKSSLINAITNNKKNAKTSSNPGSTRQINFYLNKGIVALVDLPGYGYSKASKEATRGYLDVMEHYLMSREALQRLVLLIDSRIGLKEIDRDFLCWLEEHGIYYSIVLTKADKLSEQALGSMVSFVQNQAQGGNFLLQPIMWVSSKSGRGIRELAHEISRCI</sequence>
<gene>
    <name evidence="1" type="primary">engB</name>
    <name type="ordered locus">APH_0421</name>
</gene>
<proteinExistence type="inferred from homology"/>
<keyword id="KW-0131">Cell cycle</keyword>
<keyword id="KW-0132">Cell division</keyword>
<keyword id="KW-0342">GTP-binding</keyword>
<keyword id="KW-0460">Magnesium</keyword>
<keyword id="KW-0479">Metal-binding</keyword>
<keyword id="KW-0547">Nucleotide-binding</keyword>
<keyword id="KW-0717">Septation</keyword>